<reference key="1">
    <citation type="journal article" date="2007" name="PLoS Genet.">
        <title>Patterns and implications of gene gain and loss in the evolution of Prochlorococcus.</title>
        <authorList>
            <person name="Kettler G.C."/>
            <person name="Martiny A.C."/>
            <person name="Huang K."/>
            <person name="Zucker J."/>
            <person name="Coleman M.L."/>
            <person name="Rodrigue S."/>
            <person name="Chen F."/>
            <person name="Lapidus A."/>
            <person name="Ferriera S."/>
            <person name="Johnson J."/>
            <person name="Steglich C."/>
            <person name="Church G.M."/>
            <person name="Richardson P."/>
            <person name="Chisholm S.W."/>
        </authorList>
    </citation>
    <scope>NUCLEOTIDE SEQUENCE [LARGE SCALE GENOMIC DNA]</scope>
    <source>
        <strain>NATL2A</strain>
    </source>
</reference>
<gene>
    <name evidence="1" type="primary">clpP1</name>
    <name type="ordered locus">PMN2A_0292</name>
</gene>
<proteinExistence type="inferred from homology"/>
<evidence type="ECO:0000255" key="1">
    <source>
        <dbReference type="HAMAP-Rule" id="MF_00444"/>
    </source>
</evidence>
<dbReference type="EC" id="3.4.21.92" evidence="1"/>
<dbReference type="EMBL" id="CP000095">
    <property type="protein sequence ID" value="AAZ57784.1"/>
    <property type="molecule type" value="Genomic_DNA"/>
</dbReference>
<dbReference type="SMR" id="Q46L44"/>
<dbReference type="STRING" id="59920.PMN2A_0292"/>
<dbReference type="MEROPS" id="S14.001"/>
<dbReference type="KEGG" id="pmn:PMN2A_0292"/>
<dbReference type="HOGENOM" id="CLU_058707_3_3_3"/>
<dbReference type="OrthoDB" id="571524at2"/>
<dbReference type="PhylomeDB" id="Q46L44"/>
<dbReference type="Proteomes" id="UP000002535">
    <property type="component" value="Chromosome"/>
</dbReference>
<dbReference type="GO" id="GO:0005737">
    <property type="term" value="C:cytoplasm"/>
    <property type="evidence" value="ECO:0007669"/>
    <property type="project" value="UniProtKB-SubCell"/>
</dbReference>
<dbReference type="GO" id="GO:0009368">
    <property type="term" value="C:endopeptidase Clp complex"/>
    <property type="evidence" value="ECO:0007669"/>
    <property type="project" value="TreeGrafter"/>
</dbReference>
<dbReference type="GO" id="GO:0004176">
    <property type="term" value="F:ATP-dependent peptidase activity"/>
    <property type="evidence" value="ECO:0007669"/>
    <property type="project" value="InterPro"/>
</dbReference>
<dbReference type="GO" id="GO:0051117">
    <property type="term" value="F:ATPase binding"/>
    <property type="evidence" value="ECO:0007669"/>
    <property type="project" value="TreeGrafter"/>
</dbReference>
<dbReference type="GO" id="GO:0004252">
    <property type="term" value="F:serine-type endopeptidase activity"/>
    <property type="evidence" value="ECO:0007669"/>
    <property type="project" value="UniProtKB-UniRule"/>
</dbReference>
<dbReference type="GO" id="GO:0006515">
    <property type="term" value="P:protein quality control for misfolded or incompletely synthesized proteins"/>
    <property type="evidence" value="ECO:0007669"/>
    <property type="project" value="TreeGrafter"/>
</dbReference>
<dbReference type="CDD" id="cd07017">
    <property type="entry name" value="S14_ClpP_2"/>
    <property type="match status" value="1"/>
</dbReference>
<dbReference type="FunFam" id="3.90.226.10:FF:000001">
    <property type="entry name" value="ATP-dependent Clp protease proteolytic subunit"/>
    <property type="match status" value="1"/>
</dbReference>
<dbReference type="Gene3D" id="3.90.226.10">
    <property type="entry name" value="2-enoyl-CoA Hydratase, Chain A, domain 1"/>
    <property type="match status" value="1"/>
</dbReference>
<dbReference type="HAMAP" id="MF_00444">
    <property type="entry name" value="ClpP"/>
    <property type="match status" value="1"/>
</dbReference>
<dbReference type="InterPro" id="IPR001907">
    <property type="entry name" value="ClpP"/>
</dbReference>
<dbReference type="InterPro" id="IPR029045">
    <property type="entry name" value="ClpP/crotonase-like_dom_sf"/>
</dbReference>
<dbReference type="InterPro" id="IPR023562">
    <property type="entry name" value="ClpP/TepA"/>
</dbReference>
<dbReference type="InterPro" id="IPR018215">
    <property type="entry name" value="ClpP_Ser_AS"/>
</dbReference>
<dbReference type="NCBIfam" id="TIGR00493">
    <property type="entry name" value="clpP"/>
    <property type="match status" value="1"/>
</dbReference>
<dbReference type="NCBIfam" id="NF001368">
    <property type="entry name" value="PRK00277.1"/>
    <property type="match status" value="1"/>
</dbReference>
<dbReference type="NCBIfam" id="NF009203">
    <property type="entry name" value="PRK12551.1"/>
    <property type="match status" value="1"/>
</dbReference>
<dbReference type="NCBIfam" id="NF009205">
    <property type="entry name" value="PRK12553.1"/>
    <property type="match status" value="1"/>
</dbReference>
<dbReference type="PANTHER" id="PTHR10381">
    <property type="entry name" value="ATP-DEPENDENT CLP PROTEASE PROTEOLYTIC SUBUNIT"/>
    <property type="match status" value="1"/>
</dbReference>
<dbReference type="PANTHER" id="PTHR10381:SF70">
    <property type="entry name" value="ATP-DEPENDENT CLP PROTEASE PROTEOLYTIC SUBUNIT"/>
    <property type="match status" value="1"/>
</dbReference>
<dbReference type="Pfam" id="PF00574">
    <property type="entry name" value="CLP_protease"/>
    <property type="match status" value="1"/>
</dbReference>
<dbReference type="PRINTS" id="PR00127">
    <property type="entry name" value="CLPPROTEASEP"/>
</dbReference>
<dbReference type="SUPFAM" id="SSF52096">
    <property type="entry name" value="ClpP/crotonase"/>
    <property type="match status" value="1"/>
</dbReference>
<dbReference type="PROSITE" id="PS00381">
    <property type="entry name" value="CLP_PROTEASE_SER"/>
    <property type="match status" value="1"/>
</dbReference>
<name>CLPP1_PROMT</name>
<sequence length="196" mass="21824">MIPIVIEESGRGERAFDIYSRLLRERIVFLGEPVTSDSANRIVAQLLFLEADDPDKDIFLYINSPGGSVYDGLGIFDTMQHVKPDIHTVCVGLAASMGAFLLCAGAKGKRSSLLHSRIMIHQPLGGARGQASDIRIQADEILFIKDKLNKELSDRTGQPIERIREDTDRDFYMSPSEAIEYGIIDNVFNKRPINSV</sequence>
<comment type="function">
    <text evidence="1">Cleaves peptides in various proteins in a process that requires ATP hydrolysis. Has a chymotrypsin-like activity. Plays a major role in the degradation of misfolded proteins.</text>
</comment>
<comment type="catalytic activity">
    <reaction evidence="1">
        <text>Hydrolysis of proteins to small peptides in the presence of ATP and magnesium. alpha-casein is the usual test substrate. In the absence of ATP, only oligopeptides shorter than five residues are hydrolyzed (such as succinyl-Leu-Tyr-|-NHMec, and Leu-Tyr-Leu-|-Tyr-Trp, in which cleavage of the -Tyr-|-Leu- and -Tyr-|-Trp bonds also occurs).</text>
        <dbReference type="EC" id="3.4.21.92"/>
    </reaction>
</comment>
<comment type="subunit">
    <text evidence="1">Fourteen ClpP subunits assemble into 2 heptameric rings which stack back to back to give a disk-like structure with a central cavity, resembling the structure of eukaryotic proteasomes.</text>
</comment>
<comment type="subcellular location">
    <subcellularLocation>
        <location evidence="1">Cytoplasm</location>
    </subcellularLocation>
</comment>
<comment type="similarity">
    <text evidence="1">Belongs to the peptidase S14 family.</text>
</comment>
<protein>
    <recommendedName>
        <fullName evidence="1">ATP-dependent Clp protease proteolytic subunit 1</fullName>
        <ecNumber evidence="1">3.4.21.92</ecNumber>
    </recommendedName>
    <alternativeName>
        <fullName evidence="1">Endopeptidase Clp 1</fullName>
    </alternativeName>
</protein>
<feature type="chain" id="PRO_0000226456" description="ATP-dependent Clp protease proteolytic subunit 1">
    <location>
        <begin position="1"/>
        <end position="196"/>
    </location>
</feature>
<feature type="active site" description="Nucleophile" evidence="1">
    <location>
        <position position="96"/>
    </location>
</feature>
<feature type="active site" evidence="1">
    <location>
        <position position="121"/>
    </location>
</feature>
<keyword id="KW-0963">Cytoplasm</keyword>
<keyword id="KW-0378">Hydrolase</keyword>
<keyword id="KW-0645">Protease</keyword>
<keyword id="KW-1185">Reference proteome</keyword>
<keyword id="KW-0720">Serine protease</keyword>
<organism>
    <name type="scientific">Prochlorococcus marinus (strain NATL2A)</name>
    <dbReference type="NCBI Taxonomy" id="59920"/>
    <lineage>
        <taxon>Bacteria</taxon>
        <taxon>Bacillati</taxon>
        <taxon>Cyanobacteriota</taxon>
        <taxon>Cyanophyceae</taxon>
        <taxon>Synechococcales</taxon>
        <taxon>Prochlorococcaceae</taxon>
        <taxon>Prochlorococcus</taxon>
    </lineage>
</organism>
<accession>Q46L44</accession>